<evidence type="ECO:0000255" key="1">
    <source>
        <dbReference type="HAMAP-Rule" id="MF_01693"/>
    </source>
</evidence>
<accession>Q8Z892</accession>
<accession>Q7C8R2</accession>
<organism>
    <name type="scientific">Salmonella typhi</name>
    <dbReference type="NCBI Taxonomy" id="90370"/>
    <lineage>
        <taxon>Bacteria</taxon>
        <taxon>Pseudomonadati</taxon>
        <taxon>Pseudomonadota</taxon>
        <taxon>Gammaproteobacteria</taxon>
        <taxon>Enterobacterales</taxon>
        <taxon>Enterobacteriaceae</taxon>
        <taxon>Salmonella</taxon>
    </lineage>
</organism>
<protein>
    <recommendedName>
        <fullName evidence="1">8-amino-7-oxononanoate synthase</fullName>
        <shortName evidence="1">AONS</shortName>
        <ecNumber evidence="1">2.3.1.47</ecNumber>
    </recommendedName>
    <alternativeName>
        <fullName evidence="1">7-keto-8-amino-pelargonic acid synthase</fullName>
        <shortName evidence="1">7-KAP synthase</shortName>
        <shortName evidence="1">KAPA synthase</shortName>
    </alternativeName>
    <alternativeName>
        <fullName evidence="1">8-amino-7-ketopelargonate synthase</fullName>
    </alternativeName>
</protein>
<reference key="1">
    <citation type="journal article" date="2001" name="Nature">
        <title>Complete genome sequence of a multiple drug resistant Salmonella enterica serovar Typhi CT18.</title>
        <authorList>
            <person name="Parkhill J."/>
            <person name="Dougan G."/>
            <person name="James K.D."/>
            <person name="Thomson N.R."/>
            <person name="Pickard D."/>
            <person name="Wain J."/>
            <person name="Churcher C.M."/>
            <person name="Mungall K.L."/>
            <person name="Bentley S.D."/>
            <person name="Holden M.T.G."/>
            <person name="Sebaihia M."/>
            <person name="Baker S."/>
            <person name="Basham D."/>
            <person name="Brooks K."/>
            <person name="Chillingworth T."/>
            <person name="Connerton P."/>
            <person name="Cronin A."/>
            <person name="Davis P."/>
            <person name="Davies R.M."/>
            <person name="Dowd L."/>
            <person name="White N."/>
            <person name="Farrar J."/>
            <person name="Feltwell T."/>
            <person name="Hamlin N."/>
            <person name="Haque A."/>
            <person name="Hien T.T."/>
            <person name="Holroyd S."/>
            <person name="Jagels K."/>
            <person name="Krogh A."/>
            <person name="Larsen T.S."/>
            <person name="Leather S."/>
            <person name="Moule S."/>
            <person name="O'Gaora P."/>
            <person name="Parry C."/>
            <person name="Quail M.A."/>
            <person name="Rutherford K.M."/>
            <person name="Simmonds M."/>
            <person name="Skelton J."/>
            <person name="Stevens K."/>
            <person name="Whitehead S."/>
            <person name="Barrell B.G."/>
        </authorList>
    </citation>
    <scope>NUCLEOTIDE SEQUENCE [LARGE SCALE GENOMIC DNA]</scope>
    <source>
        <strain>CT18</strain>
    </source>
</reference>
<reference key="2">
    <citation type="journal article" date="2003" name="J. Bacteriol.">
        <title>Comparative genomics of Salmonella enterica serovar Typhi strains Ty2 and CT18.</title>
        <authorList>
            <person name="Deng W."/>
            <person name="Liou S.-R."/>
            <person name="Plunkett G. III"/>
            <person name="Mayhew G.F."/>
            <person name="Rose D.J."/>
            <person name="Burland V."/>
            <person name="Kodoyianni V."/>
            <person name="Schwartz D.C."/>
            <person name="Blattner F.R."/>
        </authorList>
    </citation>
    <scope>NUCLEOTIDE SEQUENCE [LARGE SCALE GENOMIC DNA]</scope>
    <source>
        <strain>ATCC 700931 / Ty2</strain>
    </source>
</reference>
<comment type="function">
    <text evidence="1">Catalyzes the decarboxylative condensation of pimeloyl-[acyl-carrier protein] and L-alanine to produce 8-amino-7-oxononanoate (AON), [acyl-carrier protein], and carbon dioxide.</text>
</comment>
<comment type="catalytic activity">
    <reaction evidence="1">
        <text>6-carboxyhexanoyl-[ACP] + L-alanine + H(+) = (8S)-8-amino-7-oxononanoate + holo-[ACP] + CO2</text>
        <dbReference type="Rhea" id="RHEA:42288"/>
        <dbReference type="Rhea" id="RHEA-COMP:9685"/>
        <dbReference type="Rhea" id="RHEA-COMP:9955"/>
        <dbReference type="ChEBI" id="CHEBI:15378"/>
        <dbReference type="ChEBI" id="CHEBI:16526"/>
        <dbReference type="ChEBI" id="CHEBI:57972"/>
        <dbReference type="ChEBI" id="CHEBI:64479"/>
        <dbReference type="ChEBI" id="CHEBI:78846"/>
        <dbReference type="ChEBI" id="CHEBI:149468"/>
        <dbReference type="EC" id="2.3.1.47"/>
    </reaction>
</comment>
<comment type="cofactor">
    <cofactor evidence="1">
        <name>pyridoxal 5'-phosphate</name>
        <dbReference type="ChEBI" id="CHEBI:597326"/>
    </cofactor>
</comment>
<comment type="pathway">
    <text evidence="1">Cofactor biosynthesis; biotin biosynthesis.</text>
</comment>
<comment type="subunit">
    <text evidence="1">Homodimer.</text>
</comment>
<comment type="similarity">
    <text evidence="1">Belongs to the class-II pyridoxal-phosphate-dependent aminotransferase family. BioF subfamily.</text>
</comment>
<dbReference type="EC" id="2.3.1.47" evidence="1"/>
<dbReference type="EMBL" id="AE014613">
    <property type="protein sequence ID" value="AAO69709.1"/>
    <property type="molecule type" value="Genomic_DNA"/>
</dbReference>
<dbReference type="EMBL" id="AL513382">
    <property type="protein sequence ID" value="CAD05243.1"/>
    <property type="molecule type" value="Genomic_DNA"/>
</dbReference>
<dbReference type="RefSeq" id="NP_455337.1">
    <property type="nucleotide sequence ID" value="NC_003198.1"/>
</dbReference>
<dbReference type="RefSeq" id="WP_000118943.1">
    <property type="nucleotide sequence ID" value="NZ_WSUR01000021.1"/>
</dbReference>
<dbReference type="SMR" id="Q8Z892"/>
<dbReference type="STRING" id="220341.gene:17584833"/>
<dbReference type="KEGG" id="stt:t2092"/>
<dbReference type="KEGG" id="sty:STY0828"/>
<dbReference type="PATRIC" id="fig|220341.7.peg.832"/>
<dbReference type="eggNOG" id="COG0156">
    <property type="taxonomic scope" value="Bacteria"/>
</dbReference>
<dbReference type="HOGENOM" id="CLU_015846_11_2_6"/>
<dbReference type="OMA" id="FSMDGDQ"/>
<dbReference type="OrthoDB" id="9807157at2"/>
<dbReference type="UniPathway" id="UPA00078"/>
<dbReference type="Proteomes" id="UP000000541">
    <property type="component" value="Chromosome"/>
</dbReference>
<dbReference type="Proteomes" id="UP000002670">
    <property type="component" value="Chromosome"/>
</dbReference>
<dbReference type="GO" id="GO:0008710">
    <property type="term" value="F:8-amino-7-oxononanoate synthase activity"/>
    <property type="evidence" value="ECO:0007669"/>
    <property type="project" value="UniProtKB-UniRule"/>
</dbReference>
<dbReference type="GO" id="GO:0030170">
    <property type="term" value="F:pyridoxal phosphate binding"/>
    <property type="evidence" value="ECO:0007669"/>
    <property type="project" value="UniProtKB-UniRule"/>
</dbReference>
<dbReference type="GO" id="GO:0009102">
    <property type="term" value="P:biotin biosynthetic process"/>
    <property type="evidence" value="ECO:0007669"/>
    <property type="project" value="UniProtKB-UniRule"/>
</dbReference>
<dbReference type="CDD" id="cd06454">
    <property type="entry name" value="KBL_like"/>
    <property type="match status" value="1"/>
</dbReference>
<dbReference type="FunFam" id="3.40.640.10:FF:000095">
    <property type="entry name" value="8-amino-7-oxononanoate synthase"/>
    <property type="match status" value="1"/>
</dbReference>
<dbReference type="Gene3D" id="3.90.1150.10">
    <property type="entry name" value="Aspartate Aminotransferase, domain 1"/>
    <property type="match status" value="1"/>
</dbReference>
<dbReference type="Gene3D" id="3.40.640.10">
    <property type="entry name" value="Type I PLP-dependent aspartate aminotransferase-like (Major domain)"/>
    <property type="match status" value="1"/>
</dbReference>
<dbReference type="HAMAP" id="MF_01693">
    <property type="entry name" value="BioF_aminotrans_2"/>
    <property type="match status" value="1"/>
</dbReference>
<dbReference type="InterPro" id="IPR001917">
    <property type="entry name" value="Aminotrans_II_pyridoxalP_BS"/>
</dbReference>
<dbReference type="InterPro" id="IPR004839">
    <property type="entry name" value="Aminotransferase_I/II_large"/>
</dbReference>
<dbReference type="InterPro" id="IPR050087">
    <property type="entry name" value="AON_synthase_class-II"/>
</dbReference>
<dbReference type="InterPro" id="IPR004723">
    <property type="entry name" value="AONS_Archaea/Proteobacteria"/>
</dbReference>
<dbReference type="InterPro" id="IPR022834">
    <property type="entry name" value="AONS_Proteobacteria"/>
</dbReference>
<dbReference type="InterPro" id="IPR015424">
    <property type="entry name" value="PyrdxlP-dep_Trfase"/>
</dbReference>
<dbReference type="InterPro" id="IPR015421">
    <property type="entry name" value="PyrdxlP-dep_Trfase_major"/>
</dbReference>
<dbReference type="InterPro" id="IPR015422">
    <property type="entry name" value="PyrdxlP-dep_Trfase_small"/>
</dbReference>
<dbReference type="NCBIfam" id="TIGR00858">
    <property type="entry name" value="bioF"/>
    <property type="match status" value="1"/>
</dbReference>
<dbReference type="PANTHER" id="PTHR13693:SF100">
    <property type="entry name" value="8-AMINO-7-OXONONANOATE SYNTHASE"/>
    <property type="match status" value="1"/>
</dbReference>
<dbReference type="PANTHER" id="PTHR13693">
    <property type="entry name" value="CLASS II AMINOTRANSFERASE/8-AMINO-7-OXONONANOATE SYNTHASE"/>
    <property type="match status" value="1"/>
</dbReference>
<dbReference type="Pfam" id="PF00155">
    <property type="entry name" value="Aminotran_1_2"/>
    <property type="match status" value="1"/>
</dbReference>
<dbReference type="SUPFAM" id="SSF53383">
    <property type="entry name" value="PLP-dependent transferases"/>
    <property type="match status" value="1"/>
</dbReference>
<dbReference type="PROSITE" id="PS00599">
    <property type="entry name" value="AA_TRANSFER_CLASS_2"/>
    <property type="match status" value="1"/>
</dbReference>
<keyword id="KW-0093">Biotin biosynthesis</keyword>
<keyword id="KW-0663">Pyridoxal phosphate</keyword>
<keyword id="KW-0808">Transferase</keyword>
<name>BIOF_SALTI</name>
<proteinExistence type="inferred from homology"/>
<gene>
    <name evidence="1" type="primary">bioF</name>
    <name type="ordered locus">STY0828</name>
    <name type="ordered locus">t2092</name>
</gene>
<sequence length="385" mass="42042">MSWQQRVDDALTARRATDTLRRRYVVSQGAGRWLVANGRQYLNFSSNDYLGLSQHPQIIRAWQQAATRFGVGSGGSGHISGYSVAHQALEEELAQWLGYPRALLFISGFAANQAVITALMKKNDRIVADRLSHASLLEAANLSPAQLRRFIHNDTQHLSRLLQSPCVGQQLVVTEGVYSMDGDSAPLAEIQHIARRHHAWLLVDDAHGIGVTGDEGRGTCWQRGVKPELLVVTFGKGFGVSGAAVLCSESVADYLLQFARHLVYSTSMPPAQAQALSASLAVIRSDEGRERREKLAALVQRFRAGVNASRFTLLNAHSAIQPLIVGDNSRALRLAEALRQQGCWATAIRPPTVPVGTARLRLTLTQAHEACDIDRLLEVLHGAGE</sequence>
<feature type="chain" id="PRO_0000381105" description="8-amino-7-oxononanoate synthase">
    <location>
        <begin position="1"/>
        <end position="385"/>
    </location>
</feature>
<feature type="binding site" evidence="1">
    <location>
        <position position="21"/>
    </location>
    <ligand>
        <name>substrate</name>
    </ligand>
</feature>
<feature type="binding site" evidence="1">
    <location>
        <begin position="108"/>
        <end position="109"/>
    </location>
    <ligand>
        <name>pyridoxal 5'-phosphate</name>
        <dbReference type="ChEBI" id="CHEBI:597326"/>
    </ligand>
</feature>
<feature type="binding site" evidence="1">
    <location>
        <position position="133"/>
    </location>
    <ligand>
        <name>substrate</name>
    </ligand>
</feature>
<feature type="binding site" evidence="1">
    <location>
        <position position="179"/>
    </location>
    <ligand>
        <name>pyridoxal 5'-phosphate</name>
        <dbReference type="ChEBI" id="CHEBI:597326"/>
    </ligand>
</feature>
<feature type="binding site" evidence="1">
    <location>
        <position position="207"/>
    </location>
    <ligand>
        <name>pyridoxal 5'-phosphate</name>
        <dbReference type="ChEBI" id="CHEBI:597326"/>
    </ligand>
</feature>
<feature type="binding site" evidence="1">
    <location>
        <position position="233"/>
    </location>
    <ligand>
        <name>pyridoxal 5'-phosphate</name>
        <dbReference type="ChEBI" id="CHEBI:597326"/>
    </ligand>
</feature>
<feature type="binding site" evidence="1">
    <location>
        <position position="352"/>
    </location>
    <ligand>
        <name>substrate</name>
    </ligand>
</feature>
<feature type="modified residue" description="N6-(pyridoxal phosphate)lysine" evidence="1">
    <location>
        <position position="236"/>
    </location>
</feature>